<organism>
    <name type="scientific">Homo sapiens</name>
    <name type="common">Human</name>
    <dbReference type="NCBI Taxonomy" id="9606"/>
    <lineage>
        <taxon>Eukaryota</taxon>
        <taxon>Metazoa</taxon>
        <taxon>Chordata</taxon>
        <taxon>Craniata</taxon>
        <taxon>Vertebrata</taxon>
        <taxon>Euteleostomi</taxon>
        <taxon>Mammalia</taxon>
        <taxon>Eutheria</taxon>
        <taxon>Euarchontoglires</taxon>
        <taxon>Primates</taxon>
        <taxon>Haplorrhini</taxon>
        <taxon>Catarrhini</taxon>
        <taxon>Hominidae</taxon>
        <taxon>Homo</taxon>
    </lineage>
</organism>
<proteinExistence type="predicted"/>
<feature type="chain" id="PRO_0000447254" description="T cell receptor beta joining 2-1">
    <location>
        <begin position="1" status="less than"/>
        <end position="16" status="greater than"/>
    </location>
</feature>
<feature type="non-terminal residue">
    <location>
        <position position="1"/>
    </location>
</feature>
<feature type="non-terminal residue">
    <location>
        <position position="16"/>
    </location>
</feature>
<keyword id="KW-1064">Adaptive immunity</keyword>
<keyword id="KW-1003">Cell membrane</keyword>
<keyword id="KW-0391">Immunity</keyword>
<keyword id="KW-0472">Membrane</keyword>
<keyword id="KW-0675">Receptor</keyword>
<keyword id="KW-1185">Reference proteome</keyword>
<keyword id="KW-1279">T cell receptor</keyword>
<sequence>SYNEQFFGPGTRLTVL</sequence>
<comment type="function">
    <text evidence="1 3 4 5">J region of the variable domain of T cell receptor (TR) beta chain that participates in the antigen recognition (PubMed:24600447). Alpha-beta T cell receptors are antigen specific receptors which are essential to the immune response and are present on the cell surface of T lymphocytes. Recognize peptide-major histocompatibility (MH) (pMH) complexes that are displayed by antigen presenting cells (APC), a prerequisite for efficient T cell adaptive immunity against pathogens (PubMed:25493333). Binding of alpha-beta TR to pMH complex initiates TR-CD3 clustering on the cell surface and intracellular activation of LCK that phosphorylates the ITAM motifs of CD3G, CD3D, CD3E and CD247 enabling the recruitment of ZAP70. In turn ZAP70 phosphorylates LAT, which recruits numerous signaling molecules to form the LAT signalosome. The LAT signalosome propagates signal branching to three major signaling pathways, the calcium, the mitogen-activated protein kinase (MAPK) kinase and the nuclear factor NF-kappa-B (NF-kB) pathways, leading to the mobilization of transcription factors that are critical for gene expression and essential for T cell growth and differentiation (PubMed:23524462). The T cell repertoire is generated in the thymus, by V-(D)-J rearrangement. This repertoire is then shaped by intrathymic selection events to generate a peripheral T cell pool of self-MH restricted, non-autoaggressive T cells. Post-thymic interaction of alpha-beta TR with the pMH complexes shapes TR structural and functional avidity (PubMed:15040585).</text>
</comment>
<comment type="subunit">
    <text evidence="2">Alpha-beta TR is a heterodimer composed of an alpha and beta chain; disulfide-linked. The alpha-beta TR is associated with the transmembrane signaling CD3 coreceptor proteins to form the TR-CD3 (TcR or TCR). The assembly of alpha-beta TR heterodimers with CD3 occurs in the endoplasmic reticulum where a single alpha-beta TR heterodimer associates with one CD3D-CD3E heterodimer, one CD3G-CD3E heterodimer and one CD247 homodimer forming a stable octameric structure. CD3D-CD3E and CD3G-CD3E heterodimers preferentially associate with TR alpha and TR beta chains, respectively. The association of the CD247 homodimer is the last step of TcR assembly in the endoplasmic reticulum and is required for transport to the cell surface.</text>
</comment>
<comment type="subcellular location">
    <subcellularLocation>
        <location evidence="2">Cell membrane</location>
    </subcellularLocation>
</comment>
<evidence type="ECO:0000303" key="1">
    <source>
    </source>
</evidence>
<evidence type="ECO:0000303" key="2">
    <source>
    </source>
</evidence>
<evidence type="ECO:0000303" key="3">
    <source>
    </source>
</evidence>
<evidence type="ECO:0000303" key="4">
    <source>
    </source>
</evidence>
<evidence type="ECO:0000303" key="5">
    <source>
    </source>
</evidence>
<evidence type="ECO:0000303" key="6">
    <source ref="2"/>
</evidence>
<evidence type="ECO:0000312" key="7">
    <source>
        <dbReference type="HGNC" id="HGNC:12168"/>
    </source>
</evidence>
<protein>
    <recommendedName>
        <fullName evidence="6">T cell receptor beta joining 2-1</fullName>
    </recommendedName>
</protein>
<accession>A0A0A0MTA7</accession>
<dbReference type="EMBL" id="AC239618">
    <property type="status" value="NOT_ANNOTATED_CDS"/>
    <property type="molecule type" value="Genomic_DNA"/>
</dbReference>
<dbReference type="EMBL" id="AC245427">
    <property type="status" value="NOT_ANNOTATED_CDS"/>
    <property type="molecule type" value="Genomic_DNA"/>
</dbReference>
<dbReference type="IMGT_GENE-DB" id="TRBJ2-1"/>
<dbReference type="BioMuta" id="TRBJ2-1"/>
<dbReference type="Ensembl" id="ENST00000390412.1">
    <property type="protein sequence ID" value="ENSP00000420669.1"/>
    <property type="gene ID" value="ENSG00000211764.1"/>
</dbReference>
<dbReference type="Ensembl" id="ENST00000631600.1">
    <property type="protein sequence ID" value="ENSP00000488460.1"/>
    <property type="gene ID" value="ENSG00000282488.1"/>
</dbReference>
<dbReference type="UCSC" id="uc064iti.1">
    <property type="organism name" value="human"/>
</dbReference>
<dbReference type="AGR" id="HGNC:12168"/>
<dbReference type="GeneCards" id="TRBJ2-1"/>
<dbReference type="HGNC" id="HGNC:12168">
    <property type="gene designation" value="TRBJ2-1"/>
</dbReference>
<dbReference type="HPA" id="ENSG00000211764">
    <property type="expression patterns" value="Group enriched (bone marrow, lymphoid tissue)"/>
</dbReference>
<dbReference type="neXtProt" id="NX_A0A0A0MTA7"/>
<dbReference type="VEuPathDB" id="HostDB:ENSG00000211764"/>
<dbReference type="HOGENOM" id="CLU_221942_7_3_1"/>
<dbReference type="InParanoid" id="A0A0A0MTA7"/>
<dbReference type="PAN-GO" id="A0A0A0MTA7">
    <property type="GO annotations" value="0 GO annotations based on evolutionary models"/>
</dbReference>
<dbReference type="SignaLink" id="A0A0A0MTA7"/>
<dbReference type="ChiTaRS" id="TRBJ2-1">
    <property type="organism name" value="human"/>
</dbReference>
<dbReference type="PRO" id="PR:A0A0A0MTA7"/>
<dbReference type="Proteomes" id="UP000005640">
    <property type="component" value="Chromosome 7"/>
</dbReference>
<dbReference type="Bgee" id="ENSG00000211764">
    <property type="expression patterns" value="Expressed in granulocyte and 81 other cell types or tissues"/>
</dbReference>
<dbReference type="GO" id="GO:0042101">
    <property type="term" value="C:T cell receptor complex"/>
    <property type="evidence" value="ECO:0007669"/>
    <property type="project" value="UniProtKB-KW"/>
</dbReference>
<dbReference type="GO" id="GO:0002250">
    <property type="term" value="P:adaptive immune response"/>
    <property type="evidence" value="ECO:0007669"/>
    <property type="project" value="UniProtKB-KW"/>
</dbReference>
<reference key="1">
    <citation type="journal article" date="2003" name="Nature">
        <title>The DNA sequence of human chromosome 7.</title>
        <authorList>
            <person name="Hillier L.W."/>
            <person name="Fulton R.S."/>
            <person name="Fulton L.A."/>
            <person name="Graves T.A."/>
            <person name="Pepin K.H."/>
            <person name="Wagner-McPherson C."/>
            <person name="Layman D."/>
            <person name="Maas J."/>
            <person name="Jaeger S."/>
            <person name="Walker R."/>
            <person name="Wylie K."/>
            <person name="Sekhon M."/>
            <person name="Becker M.C."/>
            <person name="O'Laughlin M.D."/>
            <person name="Schaller M.E."/>
            <person name="Fewell G.A."/>
            <person name="Delehaunty K.D."/>
            <person name="Miner T.L."/>
            <person name="Nash W.E."/>
            <person name="Cordes M."/>
            <person name="Du H."/>
            <person name="Sun H."/>
            <person name="Edwards J."/>
            <person name="Bradshaw-Cordum H."/>
            <person name="Ali J."/>
            <person name="Andrews S."/>
            <person name="Isak A."/>
            <person name="Vanbrunt A."/>
            <person name="Nguyen C."/>
            <person name="Du F."/>
            <person name="Lamar B."/>
            <person name="Courtney L."/>
            <person name="Kalicki J."/>
            <person name="Ozersky P."/>
            <person name="Bielicki L."/>
            <person name="Scott K."/>
            <person name="Holmes A."/>
            <person name="Harkins R."/>
            <person name="Harris A."/>
            <person name="Strong C.M."/>
            <person name="Hou S."/>
            <person name="Tomlinson C."/>
            <person name="Dauphin-Kohlberg S."/>
            <person name="Kozlowicz-Reilly A."/>
            <person name="Leonard S."/>
            <person name="Rohlfing T."/>
            <person name="Rock S.M."/>
            <person name="Tin-Wollam A.-M."/>
            <person name="Abbott A."/>
            <person name="Minx P."/>
            <person name="Maupin R."/>
            <person name="Strowmatt C."/>
            <person name="Latreille P."/>
            <person name="Miller N."/>
            <person name="Johnson D."/>
            <person name="Murray J."/>
            <person name="Woessner J.P."/>
            <person name="Wendl M.C."/>
            <person name="Yang S.-P."/>
            <person name="Schultz B.R."/>
            <person name="Wallis J.W."/>
            <person name="Spieth J."/>
            <person name="Bieri T.A."/>
            <person name="Nelson J.O."/>
            <person name="Berkowicz N."/>
            <person name="Wohldmann P.E."/>
            <person name="Cook L.L."/>
            <person name="Hickenbotham M.T."/>
            <person name="Eldred J."/>
            <person name="Williams D."/>
            <person name="Bedell J.A."/>
            <person name="Mardis E.R."/>
            <person name="Clifton S.W."/>
            <person name="Chissoe S.L."/>
            <person name="Marra M.A."/>
            <person name="Raymond C."/>
            <person name="Haugen E."/>
            <person name="Gillett W."/>
            <person name="Zhou Y."/>
            <person name="James R."/>
            <person name="Phelps K."/>
            <person name="Iadanoto S."/>
            <person name="Bubb K."/>
            <person name="Simms E."/>
            <person name="Levy R."/>
            <person name="Clendenning J."/>
            <person name="Kaul R."/>
            <person name="Kent W.J."/>
            <person name="Furey T.S."/>
            <person name="Baertsch R.A."/>
            <person name="Brent M.R."/>
            <person name="Keibler E."/>
            <person name="Flicek P."/>
            <person name="Bork P."/>
            <person name="Suyama M."/>
            <person name="Bailey J.A."/>
            <person name="Portnoy M.E."/>
            <person name="Torrents D."/>
            <person name="Chinwalla A.T."/>
            <person name="Gish W.R."/>
            <person name="Eddy S.R."/>
            <person name="McPherson J.D."/>
            <person name="Olson M.V."/>
            <person name="Eichler E.E."/>
            <person name="Green E.D."/>
            <person name="Waterston R.H."/>
            <person name="Wilson R.K."/>
        </authorList>
    </citation>
    <scope>NUCLEOTIDE SEQUENCE [LARGE SCALE GENOMIC DNA] (IMGT ALLELE TRBJ2-1*01)</scope>
</reference>
<reference key="2">
    <citation type="book" date="2001" name="The T Cell Receptor FactsBook.">
        <title>The T Cell Receptor FactsBook.</title>
        <editorList>
            <person name="Lefranc M.P."/>
            <person name="Lefranc G."/>
        </editorList>
        <authorList>
            <person name="Lefranc M.P."/>
            <person name="Lefranc G."/>
        </authorList>
    </citation>
    <scope>NOMENCLATURE</scope>
</reference>
<reference key="3">
    <citation type="journal article" date="2004" name="Nat. Rev. Immunol.">
        <title>The many important facets of T-cell repertoire diversity.</title>
        <authorList>
            <person name="Nikolich-Zugich J."/>
            <person name="Slifka M.K."/>
            <person name="Messaoudi I."/>
        </authorList>
    </citation>
    <scope>REVIEW ON T CELL REPERTOIRE DIVERSITY</scope>
</reference>
<reference key="4">
    <citation type="journal article" date="2010" name="Cold Spring Harb. Perspect. Biol.">
        <title>Structural biology of the T-cell receptor: insights into receptor assembly, ligand recognition, and initiation of signaling.</title>
        <authorList>
            <person name="Wucherpfennig K.W."/>
            <person name="Gagnon E."/>
            <person name="Call M.J."/>
            <person name="Huseby E.S."/>
            <person name="Call M.E."/>
        </authorList>
    </citation>
    <scope>REVIEW ON T CELL RECEPTOR-CD3 COMPLEX ASSEMBLY</scope>
    <scope>SUBCELLULAR LOCATION</scope>
</reference>
<reference key="5">
    <citation type="journal article" date="2013" name="Nat. Rev. Immunol.">
        <title>T cell receptor signalling networks: branched, diversified and bounded.</title>
        <authorList>
            <person name="Brownlie R.J."/>
            <person name="Zamoyska R."/>
        </authorList>
    </citation>
    <scope>REVIEW ON T CELL RECEPTOR SIGNALING</scope>
</reference>
<reference key="6">
    <citation type="journal article" date="2014" name="Front. Immunol.">
        <title>Immunoglobulin and T Cell Receptor Genes: IMGT((R)) and the Birth and Rise of Immunoinformatics.</title>
        <authorList>
            <person name="Lefranc M.P."/>
        </authorList>
    </citation>
    <scope>NOMENCLATURE</scope>
</reference>
<reference key="7">
    <citation type="journal article" date="2015" name="Annu. Rev. Immunol.">
        <title>T cell antigen receptor recognition of antigen-presenting molecules.</title>
        <authorList>
            <person name="Rossjohn J."/>
            <person name="Gras S."/>
            <person name="Miles J.J."/>
            <person name="Turner S.J."/>
            <person name="Godfrey D.I."/>
            <person name="McCluskey J."/>
        </authorList>
    </citation>
    <scope>REVIEW ON FUNCTION</scope>
</reference>
<gene>
    <name evidence="6 7" type="primary">TRBJ2-1</name>
</gene>
<name>TJB21_HUMAN</name>